<gene>
    <name type="primary">JIP5</name>
    <name type="ORF">UMAG_03036</name>
</gene>
<evidence type="ECO:0000250" key="1"/>
<evidence type="ECO:0000256" key="2">
    <source>
        <dbReference type="SAM" id="MobiDB-lite"/>
    </source>
</evidence>
<evidence type="ECO:0000305" key="3"/>
<dbReference type="EMBL" id="CM003146">
    <property type="protein sequence ID" value="KIS69057.1"/>
    <property type="molecule type" value="Genomic_DNA"/>
</dbReference>
<dbReference type="RefSeq" id="XP_011389411.1">
    <property type="nucleotide sequence ID" value="XM_011391109.1"/>
</dbReference>
<dbReference type="SMR" id="Q4PA27"/>
<dbReference type="FunCoup" id="Q4PA27">
    <property type="interactions" value="442"/>
</dbReference>
<dbReference type="STRING" id="237631.Q4PA27"/>
<dbReference type="EnsemblFungi" id="KIS69057">
    <property type="protein sequence ID" value="KIS69057"/>
    <property type="gene ID" value="UMAG_03036"/>
</dbReference>
<dbReference type="GeneID" id="23563621"/>
<dbReference type="KEGG" id="uma:UMAG_03036"/>
<dbReference type="VEuPathDB" id="FungiDB:UMAG_03036"/>
<dbReference type="eggNOG" id="KOG2444">
    <property type="taxonomic scope" value="Eukaryota"/>
</dbReference>
<dbReference type="HOGENOM" id="CLU_035848_2_1_1"/>
<dbReference type="InParanoid" id="Q4PA27"/>
<dbReference type="OMA" id="MITINNS"/>
<dbReference type="OrthoDB" id="2288928at2759"/>
<dbReference type="Proteomes" id="UP000000561">
    <property type="component" value="Chromosome 7"/>
</dbReference>
<dbReference type="GO" id="GO:0005730">
    <property type="term" value="C:nucleolus"/>
    <property type="evidence" value="ECO:0007669"/>
    <property type="project" value="UniProtKB-SubCell"/>
</dbReference>
<dbReference type="Gene3D" id="2.130.10.10">
    <property type="entry name" value="YVTN repeat-like/Quinoprotein amine dehydrogenase"/>
    <property type="match status" value="2"/>
</dbReference>
<dbReference type="InterPro" id="IPR015943">
    <property type="entry name" value="WD40/YVTN_repeat-like_dom_sf"/>
</dbReference>
<dbReference type="InterPro" id="IPR019775">
    <property type="entry name" value="WD40_repeat_CS"/>
</dbReference>
<dbReference type="InterPro" id="IPR036322">
    <property type="entry name" value="WD40_repeat_dom_sf"/>
</dbReference>
<dbReference type="InterPro" id="IPR001680">
    <property type="entry name" value="WD40_rpt"/>
</dbReference>
<dbReference type="InterPro" id="IPR050505">
    <property type="entry name" value="WDR55_POC1"/>
</dbReference>
<dbReference type="PANTHER" id="PTHR44019">
    <property type="entry name" value="WD REPEAT-CONTAINING PROTEIN 55"/>
    <property type="match status" value="1"/>
</dbReference>
<dbReference type="PANTHER" id="PTHR44019:SF20">
    <property type="entry name" value="WD REPEAT-CONTAINING PROTEIN 55"/>
    <property type="match status" value="1"/>
</dbReference>
<dbReference type="Pfam" id="PF00400">
    <property type="entry name" value="WD40"/>
    <property type="match status" value="1"/>
</dbReference>
<dbReference type="SMART" id="SM00320">
    <property type="entry name" value="WD40"/>
    <property type="match status" value="4"/>
</dbReference>
<dbReference type="SUPFAM" id="SSF50978">
    <property type="entry name" value="WD40 repeat-like"/>
    <property type="match status" value="1"/>
</dbReference>
<dbReference type="PROSITE" id="PS00678">
    <property type="entry name" value="WD_REPEATS_1"/>
    <property type="match status" value="1"/>
</dbReference>
<dbReference type="PROSITE" id="PS50082">
    <property type="entry name" value="WD_REPEATS_2"/>
    <property type="match status" value="1"/>
</dbReference>
<dbReference type="PROSITE" id="PS50294">
    <property type="entry name" value="WD_REPEATS_REGION"/>
    <property type="match status" value="1"/>
</dbReference>
<protein>
    <recommendedName>
        <fullName>WD repeat-containing protein JIP5</fullName>
    </recommendedName>
</protein>
<proteinExistence type="inferred from homology"/>
<comment type="subcellular location">
    <subcellularLocation>
        <location evidence="1">Nucleus</location>
        <location evidence="1">Nucleolus</location>
    </subcellularLocation>
</comment>
<comment type="similarity">
    <text evidence="3">Belongs to the WD repeat WDR55 family.</text>
</comment>
<name>JIP5_MYCMD</name>
<reference key="1">
    <citation type="journal article" date="2006" name="Nature">
        <title>Insights from the genome of the biotrophic fungal plant pathogen Ustilago maydis.</title>
        <authorList>
            <person name="Kaemper J."/>
            <person name="Kahmann R."/>
            <person name="Boelker M."/>
            <person name="Ma L.-J."/>
            <person name="Brefort T."/>
            <person name="Saville B.J."/>
            <person name="Banuett F."/>
            <person name="Kronstad J.W."/>
            <person name="Gold S.E."/>
            <person name="Mueller O."/>
            <person name="Perlin M.H."/>
            <person name="Woesten H.A.B."/>
            <person name="de Vries R."/>
            <person name="Ruiz-Herrera J."/>
            <person name="Reynaga-Pena C.G."/>
            <person name="Snetselaar K."/>
            <person name="McCann M."/>
            <person name="Perez-Martin J."/>
            <person name="Feldbruegge M."/>
            <person name="Basse C.W."/>
            <person name="Steinberg G."/>
            <person name="Ibeas J.I."/>
            <person name="Holloman W."/>
            <person name="Guzman P."/>
            <person name="Farman M.L."/>
            <person name="Stajich J.E."/>
            <person name="Sentandreu R."/>
            <person name="Gonzalez-Prieto J.M."/>
            <person name="Kennell J.C."/>
            <person name="Molina L."/>
            <person name="Schirawski J."/>
            <person name="Mendoza-Mendoza A."/>
            <person name="Greilinger D."/>
            <person name="Muench K."/>
            <person name="Roessel N."/>
            <person name="Scherer M."/>
            <person name="Vranes M."/>
            <person name="Ladendorf O."/>
            <person name="Vincon V."/>
            <person name="Fuchs U."/>
            <person name="Sandrock B."/>
            <person name="Meng S."/>
            <person name="Ho E.C.H."/>
            <person name="Cahill M.J."/>
            <person name="Boyce K.J."/>
            <person name="Klose J."/>
            <person name="Klosterman S.J."/>
            <person name="Deelstra H.J."/>
            <person name="Ortiz-Castellanos L."/>
            <person name="Li W."/>
            <person name="Sanchez-Alonso P."/>
            <person name="Schreier P.H."/>
            <person name="Haeuser-Hahn I."/>
            <person name="Vaupel M."/>
            <person name="Koopmann E."/>
            <person name="Friedrich G."/>
            <person name="Voss H."/>
            <person name="Schlueter T."/>
            <person name="Margolis J."/>
            <person name="Platt D."/>
            <person name="Swimmer C."/>
            <person name="Gnirke A."/>
            <person name="Chen F."/>
            <person name="Vysotskaia V."/>
            <person name="Mannhaupt G."/>
            <person name="Gueldener U."/>
            <person name="Muensterkoetter M."/>
            <person name="Haase D."/>
            <person name="Oesterheld M."/>
            <person name="Mewes H.-W."/>
            <person name="Mauceli E.W."/>
            <person name="DeCaprio D."/>
            <person name="Wade C.M."/>
            <person name="Butler J."/>
            <person name="Young S.K."/>
            <person name="Jaffe D.B."/>
            <person name="Calvo S.E."/>
            <person name="Nusbaum C."/>
            <person name="Galagan J.E."/>
            <person name="Birren B.W."/>
        </authorList>
    </citation>
    <scope>NUCLEOTIDE SEQUENCE [LARGE SCALE GENOMIC DNA]</scope>
    <source>
        <strain>DSM 14603 / FGSC 9021 / UM521</strain>
    </source>
</reference>
<reference key="2">
    <citation type="submission" date="2014-09" db="EMBL/GenBank/DDBJ databases">
        <authorList>
            <person name="Gueldener U."/>
            <person name="Muensterkoetter M."/>
            <person name="Walter M.C."/>
            <person name="Mannhaupt G."/>
            <person name="Kahmann R."/>
        </authorList>
    </citation>
    <scope>GENOME REANNOTATION</scope>
    <source>
        <strain>DSM 14603 / FGSC 9021 / UM521</strain>
    </source>
</reference>
<organism>
    <name type="scientific">Mycosarcoma maydis</name>
    <name type="common">Corn smut fungus</name>
    <name type="synonym">Ustilago maydis</name>
    <dbReference type="NCBI Taxonomy" id="5270"/>
    <lineage>
        <taxon>Eukaryota</taxon>
        <taxon>Fungi</taxon>
        <taxon>Dikarya</taxon>
        <taxon>Basidiomycota</taxon>
        <taxon>Ustilaginomycotina</taxon>
        <taxon>Ustilaginomycetes</taxon>
        <taxon>Ustilaginales</taxon>
        <taxon>Ustilaginaceae</taxon>
        <taxon>Mycosarcoma</taxon>
    </lineage>
</organism>
<keyword id="KW-0539">Nucleus</keyword>
<keyword id="KW-1185">Reference proteome</keyword>
<keyword id="KW-0677">Repeat</keyword>
<keyword id="KW-0853">WD repeat</keyword>
<accession>Q4PA27</accession>
<accession>A0A0D1C617</accession>
<sequence length="489" mass="53111">MDIPLSSDALDLCFHPAAETNLLAVGLISGKIQLINYDDYLSSPSSSRTPLAPPSKKSKPSTISSAVETPTKLYRKLYTSRPSKKSCRGLHFSTTGSSIFSISKDKSLFSTDTQTGKVVQSWIEVHDAAPSRVLPVDESLVVTGDDDGVVRLWDVRKGGGKGIKPVRMWEHHFDWITDMVYLADLPVPKPKSIKEAKKSKTQLKKQRRRARQAERLKEHDKEKREQNASDTEASEPDSEDDAAIKVESRSRLIVTSGDGSLSSIDLLSSGPTSFEQSEDQEDELLSITSIRSSTKLVVGTQLGILSLWTPSRGLLDHVDRVPGHPASVDTLVTLDNETVLTGSSDGLVRVVQILPSKLLGVIASHNGLPVERMKRKQSVLASIGHTNAVKLTDLSPLLDDNDDQGDDDDEQAGALGIVGLAEDDSDDDDDDDDDDDDDDDEKHLVVELDGAEQTDGDAESGQDDEQDPDSEDVTPSQNKAGKGGFFSDL</sequence>
<feature type="chain" id="PRO_0000333572" description="WD repeat-containing protein JIP5">
    <location>
        <begin position="1"/>
        <end position="489"/>
    </location>
</feature>
<feature type="repeat" description="WD 1">
    <location>
        <begin position="4"/>
        <end position="45"/>
    </location>
</feature>
<feature type="repeat" description="WD 2">
    <location>
        <begin position="124"/>
        <end position="163"/>
    </location>
</feature>
<feature type="repeat" description="WD 3">
    <location>
        <begin position="279"/>
        <end position="318"/>
    </location>
</feature>
<feature type="repeat" description="WD 4">
    <location>
        <begin position="323"/>
        <end position="363"/>
    </location>
</feature>
<feature type="region of interest" description="Disordered" evidence="2">
    <location>
        <begin position="46"/>
        <end position="66"/>
    </location>
</feature>
<feature type="region of interest" description="Disordered" evidence="2">
    <location>
        <begin position="192"/>
        <end position="246"/>
    </location>
</feature>
<feature type="region of interest" description="Disordered" evidence="2">
    <location>
        <begin position="417"/>
        <end position="489"/>
    </location>
</feature>
<feature type="compositionally biased region" description="Basic residues" evidence="2">
    <location>
        <begin position="199"/>
        <end position="210"/>
    </location>
</feature>
<feature type="compositionally biased region" description="Basic and acidic residues" evidence="2">
    <location>
        <begin position="211"/>
        <end position="227"/>
    </location>
</feature>
<feature type="compositionally biased region" description="Acidic residues" evidence="2">
    <location>
        <begin position="232"/>
        <end position="241"/>
    </location>
</feature>
<feature type="compositionally biased region" description="Acidic residues" evidence="2">
    <location>
        <begin position="421"/>
        <end position="440"/>
    </location>
</feature>
<feature type="compositionally biased region" description="Acidic residues" evidence="2">
    <location>
        <begin position="449"/>
        <end position="472"/>
    </location>
</feature>